<organism>
    <name type="scientific">Escherichia coli O127:H6 (strain E2348/69 / EPEC)</name>
    <dbReference type="NCBI Taxonomy" id="574521"/>
    <lineage>
        <taxon>Bacteria</taxon>
        <taxon>Pseudomonadati</taxon>
        <taxon>Pseudomonadota</taxon>
        <taxon>Gammaproteobacteria</taxon>
        <taxon>Enterobacterales</taxon>
        <taxon>Enterobacteriaceae</taxon>
        <taxon>Escherichia</taxon>
    </lineage>
</organism>
<sequence length="503" mass="54880">MEFSVKSGSPEKQRSACIVVGVFEPRRLSPIAEQLDKISDGYISALLRRGELEGKPGQTLLLHHVPNVLSERILLIGCGKERELDERQYKQVIQKTINTLNDTGSMEAVCFLTELHVKGRNNYWKVRQAVETAKETLYSFDQLKTNKSEPRRPLRKMVFNVPTRRELTSGERAIQHGLAIAAGIKAAKDLGNMPPNICNAAYLASQARQLADSYSKNVITRVIGEQQMKELGMHSYLAVGQGSQNESLMSVIEYKGNASEDARPIVLVGKGLTFDSGGISIKPSEGMDEMKYDMCGAAAVYGVMRMVAELQLPINVIGVLAGCENMPGGRAYRPGDVLTTMSGQTVEVLNTDAEGRLVLCDVLTYVERFEPEAVIDVATLTGACVIALGHHITGLMANHNPLAHELIAASEQSGDRAWRLPLGDEYQEQLESNFADMANIGGRPGGAITAGCFLSRFTRKYNWAHLDIAGTAWRSGKAKGATGRPVALLAQFLLNRAGFNGEE</sequence>
<comment type="function">
    <text evidence="1">Presumably involved in the processing and regular turnover of intracellular proteins. Catalyzes the removal of unsubstituted N-terminal amino acids from various peptides.</text>
</comment>
<comment type="catalytic activity">
    <reaction evidence="1">
        <text>Release of an N-terminal amino acid, Xaa-|-Yaa-, in which Xaa is preferably Leu, but may be other amino acids including Pro although not Arg or Lys, and Yaa may be Pro. Amino acid amides and methyl esters are also readily hydrolyzed, but rates on arylamides are exceedingly low.</text>
        <dbReference type="EC" id="3.4.11.1"/>
    </reaction>
</comment>
<comment type="catalytic activity">
    <reaction evidence="1">
        <text>Release of an N-terminal amino acid, preferentially leucine, but not glutamic or aspartic acids.</text>
        <dbReference type="EC" id="3.4.11.10"/>
    </reaction>
</comment>
<comment type="cofactor">
    <cofactor evidence="1">
        <name>Mn(2+)</name>
        <dbReference type="ChEBI" id="CHEBI:29035"/>
    </cofactor>
    <text evidence="1">Binds 2 manganese ions per subunit.</text>
</comment>
<comment type="subcellular location">
    <subcellularLocation>
        <location evidence="1">Cytoplasm</location>
    </subcellularLocation>
</comment>
<comment type="similarity">
    <text evidence="1">Belongs to the peptidase M17 family.</text>
</comment>
<proteinExistence type="inferred from homology"/>
<keyword id="KW-0031">Aminopeptidase</keyword>
<keyword id="KW-0963">Cytoplasm</keyword>
<keyword id="KW-0378">Hydrolase</keyword>
<keyword id="KW-0464">Manganese</keyword>
<keyword id="KW-0479">Metal-binding</keyword>
<keyword id="KW-0645">Protease</keyword>
<keyword id="KW-1185">Reference proteome</keyword>
<reference key="1">
    <citation type="journal article" date="2009" name="J. Bacteriol.">
        <title>Complete genome sequence and comparative genome analysis of enteropathogenic Escherichia coli O127:H6 strain E2348/69.</title>
        <authorList>
            <person name="Iguchi A."/>
            <person name="Thomson N.R."/>
            <person name="Ogura Y."/>
            <person name="Saunders D."/>
            <person name="Ooka T."/>
            <person name="Henderson I.R."/>
            <person name="Harris D."/>
            <person name="Asadulghani M."/>
            <person name="Kurokawa K."/>
            <person name="Dean P."/>
            <person name="Kenny B."/>
            <person name="Quail M.A."/>
            <person name="Thurston S."/>
            <person name="Dougan G."/>
            <person name="Hayashi T."/>
            <person name="Parkhill J."/>
            <person name="Frankel G."/>
        </authorList>
    </citation>
    <scope>NUCLEOTIDE SEQUENCE [LARGE SCALE GENOMIC DNA]</scope>
    <source>
        <strain>E2348/69 / EPEC</strain>
    </source>
</reference>
<accession>B7UQR7</accession>
<feature type="chain" id="PRO_1000192713" description="Probable cytosol aminopeptidase">
    <location>
        <begin position="1"/>
        <end position="503"/>
    </location>
</feature>
<feature type="active site" evidence="1">
    <location>
        <position position="282"/>
    </location>
</feature>
<feature type="active site" evidence="1">
    <location>
        <position position="356"/>
    </location>
</feature>
<feature type="binding site" evidence="1">
    <location>
        <position position="270"/>
    </location>
    <ligand>
        <name>Mn(2+)</name>
        <dbReference type="ChEBI" id="CHEBI:29035"/>
        <label>2</label>
    </ligand>
</feature>
<feature type="binding site" evidence="1">
    <location>
        <position position="275"/>
    </location>
    <ligand>
        <name>Mn(2+)</name>
        <dbReference type="ChEBI" id="CHEBI:29035"/>
        <label>1</label>
    </ligand>
</feature>
<feature type="binding site" evidence="1">
    <location>
        <position position="275"/>
    </location>
    <ligand>
        <name>Mn(2+)</name>
        <dbReference type="ChEBI" id="CHEBI:29035"/>
        <label>2</label>
    </ligand>
</feature>
<feature type="binding site" evidence="1">
    <location>
        <position position="293"/>
    </location>
    <ligand>
        <name>Mn(2+)</name>
        <dbReference type="ChEBI" id="CHEBI:29035"/>
        <label>2</label>
    </ligand>
</feature>
<feature type="binding site" evidence="1">
    <location>
        <position position="352"/>
    </location>
    <ligand>
        <name>Mn(2+)</name>
        <dbReference type="ChEBI" id="CHEBI:29035"/>
        <label>1</label>
    </ligand>
</feature>
<feature type="binding site" evidence="1">
    <location>
        <position position="354"/>
    </location>
    <ligand>
        <name>Mn(2+)</name>
        <dbReference type="ChEBI" id="CHEBI:29035"/>
        <label>1</label>
    </ligand>
</feature>
<feature type="binding site" evidence="1">
    <location>
        <position position="354"/>
    </location>
    <ligand>
        <name>Mn(2+)</name>
        <dbReference type="ChEBI" id="CHEBI:29035"/>
        <label>2</label>
    </ligand>
</feature>
<name>AMPA_ECO27</name>
<dbReference type="EC" id="3.4.11.1" evidence="1"/>
<dbReference type="EC" id="3.4.11.10" evidence="1"/>
<dbReference type="EMBL" id="FM180568">
    <property type="protein sequence ID" value="CAS12132.1"/>
    <property type="molecule type" value="Genomic_DNA"/>
</dbReference>
<dbReference type="RefSeq" id="WP_000397144.1">
    <property type="nucleotide sequence ID" value="NC_011601.1"/>
</dbReference>
<dbReference type="SMR" id="B7UQR7"/>
<dbReference type="MEROPS" id="M17.003"/>
<dbReference type="GeneID" id="93777558"/>
<dbReference type="KEGG" id="ecg:E2348C_4584"/>
<dbReference type="HOGENOM" id="CLU_013734_2_2_6"/>
<dbReference type="Proteomes" id="UP000008205">
    <property type="component" value="Chromosome"/>
</dbReference>
<dbReference type="GO" id="GO:0005737">
    <property type="term" value="C:cytoplasm"/>
    <property type="evidence" value="ECO:0007669"/>
    <property type="project" value="UniProtKB-SubCell"/>
</dbReference>
<dbReference type="GO" id="GO:0030145">
    <property type="term" value="F:manganese ion binding"/>
    <property type="evidence" value="ECO:0007669"/>
    <property type="project" value="UniProtKB-UniRule"/>
</dbReference>
<dbReference type="GO" id="GO:0070006">
    <property type="term" value="F:metalloaminopeptidase activity"/>
    <property type="evidence" value="ECO:0007669"/>
    <property type="project" value="InterPro"/>
</dbReference>
<dbReference type="GO" id="GO:0006508">
    <property type="term" value="P:proteolysis"/>
    <property type="evidence" value="ECO:0007669"/>
    <property type="project" value="UniProtKB-KW"/>
</dbReference>
<dbReference type="CDD" id="cd00433">
    <property type="entry name" value="Peptidase_M17"/>
    <property type="match status" value="1"/>
</dbReference>
<dbReference type="FunFam" id="3.40.220.10:FF:000001">
    <property type="entry name" value="Probable cytosol aminopeptidase"/>
    <property type="match status" value="1"/>
</dbReference>
<dbReference type="FunFam" id="3.40.630.10:FF:000004">
    <property type="entry name" value="Probable cytosol aminopeptidase"/>
    <property type="match status" value="1"/>
</dbReference>
<dbReference type="Gene3D" id="3.40.220.10">
    <property type="entry name" value="Leucine Aminopeptidase, subunit E, domain 1"/>
    <property type="match status" value="1"/>
</dbReference>
<dbReference type="Gene3D" id="3.40.630.10">
    <property type="entry name" value="Zn peptidases"/>
    <property type="match status" value="1"/>
</dbReference>
<dbReference type="HAMAP" id="MF_00181">
    <property type="entry name" value="Cytosol_peptidase_M17"/>
    <property type="match status" value="1"/>
</dbReference>
<dbReference type="InterPro" id="IPR011356">
    <property type="entry name" value="Leucine_aapep/pepB"/>
</dbReference>
<dbReference type="InterPro" id="IPR043472">
    <property type="entry name" value="Macro_dom-like"/>
</dbReference>
<dbReference type="InterPro" id="IPR000819">
    <property type="entry name" value="Peptidase_M17_C"/>
</dbReference>
<dbReference type="InterPro" id="IPR023042">
    <property type="entry name" value="Peptidase_M17_leu_NH2_pept"/>
</dbReference>
<dbReference type="InterPro" id="IPR008283">
    <property type="entry name" value="Peptidase_M17_N"/>
</dbReference>
<dbReference type="NCBIfam" id="NF002072">
    <property type="entry name" value="PRK00913.1-1"/>
    <property type="match status" value="1"/>
</dbReference>
<dbReference type="NCBIfam" id="NF002073">
    <property type="entry name" value="PRK00913.1-2"/>
    <property type="match status" value="1"/>
</dbReference>
<dbReference type="NCBIfam" id="NF002074">
    <property type="entry name" value="PRK00913.1-4"/>
    <property type="match status" value="1"/>
</dbReference>
<dbReference type="PANTHER" id="PTHR11963:SF23">
    <property type="entry name" value="CYTOSOL AMINOPEPTIDASE"/>
    <property type="match status" value="1"/>
</dbReference>
<dbReference type="PANTHER" id="PTHR11963">
    <property type="entry name" value="LEUCINE AMINOPEPTIDASE-RELATED"/>
    <property type="match status" value="1"/>
</dbReference>
<dbReference type="Pfam" id="PF00883">
    <property type="entry name" value="Peptidase_M17"/>
    <property type="match status" value="1"/>
</dbReference>
<dbReference type="Pfam" id="PF02789">
    <property type="entry name" value="Peptidase_M17_N"/>
    <property type="match status" value="1"/>
</dbReference>
<dbReference type="PRINTS" id="PR00481">
    <property type="entry name" value="LAMNOPPTDASE"/>
</dbReference>
<dbReference type="SUPFAM" id="SSF52949">
    <property type="entry name" value="Macro domain-like"/>
    <property type="match status" value="1"/>
</dbReference>
<dbReference type="SUPFAM" id="SSF53187">
    <property type="entry name" value="Zn-dependent exopeptidases"/>
    <property type="match status" value="1"/>
</dbReference>
<dbReference type="PROSITE" id="PS00631">
    <property type="entry name" value="CYTOSOL_AP"/>
    <property type="match status" value="1"/>
</dbReference>
<gene>
    <name evidence="1" type="primary">pepA</name>
    <name type="ordered locus">E2348C_4584</name>
</gene>
<protein>
    <recommendedName>
        <fullName evidence="1">Probable cytosol aminopeptidase</fullName>
        <ecNumber evidence="1">3.4.11.1</ecNumber>
    </recommendedName>
    <alternativeName>
        <fullName evidence="1">Leucine aminopeptidase</fullName>
        <shortName evidence="1">LAP</shortName>
        <ecNumber evidence="1">3.4.11.10</ecNumber>
    </alternativeName>
    <alternativeName>
        <fullName evidence="1">Leucyl aminopeptidase</fullName>
    </alternativeName>
</protein>
<evidence type="ECO:0000255" key="1">
    <source>
        <dbReference type="HAMAP-Rule" id="MF_00181"/>
    </source>
</evidence>